<reference key="1">
    <citation type="journal article" date="2006" name="Nat. Biotechnol.">
        <title>Genome sequence of the bioplastic-producing 'Knallgas' bacterium Ralstonia eutropha H16.</title>
        <authorList>
            <person name="Pohlmann A."/>
            <person name="Fricke W.F."/>
            <person name="Reinecke F."/>
            <person name="Kusian B."/>
            <person name="Liesegang H."/>
            <person name="Cramm R."/>
            <person name="Eitinger T."/>
            <person name="Ewering C."/>
            <person name="Poetter M."/>
            <person name="Schwartz E."/>
            <person name="Strittmatter A."/>
            <person name="Voss I."/>
            <person name="Gottschalk G."/>
            <person name="Steinbuechel A."/>
            <person name="Friedrich B."/>
            <person name="Bowien B."/>
        </authorList>
    </citation>
    <scope>NUCLEOTIDE SEQUENCE [LARGE SCALE GENOMIC DNA]</scope>
    <source>
        <strain>ATCC 17699 / DSM 428 / KCTC 22496 / NCIMB 10442 / H16 / Stanier 337</strain>
    </source>
</reference>
<comment type="function">
    <text evidence="1">Endonuclease that specifically degrades the RNA of RNA-DNA hybrids.</text>
</comment>
<comment type="catalytic activity">
    <reaction evidence="1">
        <text>Endonucleolytic cleavage to 5'-phosphomonoester.</text>
        <dbReference type="EC" id="3.1.26.4"/>
    </reaction>
</comment>
<comment type="cofactor">
    <cofactor evidence="1">
        <name>Mg(2+)</name>
        <dbReference type="ChEBI" id="CHEBI:18420"/>
    </cofactor>
    <text evidence="1">Binds 1 Mg(2+) ion per subunit. May bind a second metal ion at a regulatory site, or after substrate binding.</text>
</comment>
<comment type="subunit">
    <text evidence="1">Monomer.</text>
</comment>
<comment type="subcellular location">
    <subcellularLocation>
        <location evidence="1">Cytoplasm</location>
    </subcellularLocation>
</comment>
<comment type="similarity">
    <text evidence="1">Belongs to the RNase H family.</text>
</comment>
<protein>
    <recommendedName>
        <fullName evidence="1">Ribonuclease H</fullName>
        <shortName evidence="1">RNase H</shortName>
        <ecNumber evidence="1">3.1.26.4</ecNumber>
    </recommendedName>
</protein>
<proteinExistence type="inferred from homology"/>
<accession>Q0K8W6</accession>
<dbReference type="EC" id="3.1.26.4" evidence="1"/>
<dbReference type="EMBL" id="AM260479">
    <property type="protein sequence ID" value="CAJ93555.1"/>
    <property type="molecule type" value="Genomic_DNA"/>
</dbReference>
<dbReference type="RefSeq" id="WP_011615666.1">
    <property type="nucleotide sequence ID" value="NC_008313.1"/>
</dbReference>
<dbReference type="SMR" id="Q0K8W6"/>
<dbReference type="STRING" id="381666.H16_A2466"/>
<dbReference type="KEGG" id="reh:H16_A2466"/>
<dbReference type="PATRIC" id="fig|381666.6.peg.2874"/>
<dbReference type="eggNOG" id="COG0328">
    <property type="taxonomic scope" value="Bacteria"/>
</dbReference>
<dbReference type="HOGENOM" id="CLU_030894_6_0_4"/>
<dbReference type="OrthoDB" id="7845843at2"/>
<dbReference type="Proteomes" id="UP000008210">
    <property type="component" value="Chromosome 1"/>
</dbReference>
<dbReference type="GO" id="GO:0005737">
    <property type="term" value="C:cytoplasm"/>
    <property type="evidence" value="ECO:0007669"/>
    <property type="project" value="UniProtKB-SubCell"/>
</dbReference>
<dbReference type="GO" id="GO:0000287">
    <property type="term" value="F:magnesium ion binding"/>
    <property type="evidence" value="ECO:0007669"/>
    <property type="project" value="UniProtKB-UniRule"/>
</dbReference>
<dbReference type="GO" id="GO:0003676">
    <property type="term" value="F:nucleic acid binding"/>
    <property type="evidence" value="ECO:0007669"/>
    <property type="project" value="InterPro"/>
</dbReference>
<dbReference type="GO" id="GO:0004523">
    <property type="term" value="F:RNA-DNA hybrid ribonuclease activity"/>
    <property type="evidence" value="ECO:0007669"/>
    <property type="project" value="UniProtKB-UniRule"/>
</dbReference>
<dbReference type="GO" id="GO:0043137">
    <property type="term" value="P:DNA replication, removal of RNA primer"/>
    <property type="evidence" value="ECO:0007669"/>
    <property type="project" value="TreeGrafter"/>
</dbReference>
<dbReference type="CDD" id="cd09278">
    <property type="entry name" value="RNase_HI_prokaryote_like"/>
    <property type="match status" value="1"/>
</dbReference>
<dbReference type="FunFam" id="3.30.420.10:FF:000089">
    <property type="entry name" value="Ribonuclease H"/>
    <property type="match status" value="1"/>
</dbReference>
<dbReference type="Gene3D" id="3.30.420.10">
    <property type="entry name" value="Ribonuclease H-like superfamily/Ribonuclease H"/>
    <property type="match status" value="1"/>
</dbReference>
<dbReference type="HAMAP" id="MF_00042">
    <property type="entry name" value="RNase_H"/>
    <property type="match status" value="1"/>
</dbReference>
<dbReference type="InterPro" id="IPR050092">
    <property type="entry name" value="RNase_H"/>
</dbReference>
<dbReference type="InterPro" id="IPR012337">
    <property type="entry name" value="RNaseH-like_sf"/>
</dbReference>
<dbReference type="InterPro" id="IPR002156">
    <property type="entry name" value="RNaseH_domain"/>
</dbReference>
<dbReference type="InterPro" id="IPR036397">
    <property type="entry name" value="RNaseH_sf"/>
</dbReference>
<dbReference type="InterPro" id="IPR022892">
    <property type="entry name" value="RNaseHI"/>
</dbReference>
<dbReference type="NCBIfam" id="NF001236">
    <property type="entry name" value="PRK00203.1"/>
    <property type="match status" value="1"/>
</dbReference>
<dbReference type="PANTHER" id="PTHR10642">
    <property type="entry name" value="RIBONUCLEASE H1"/>
    <property type="match status" value="1"/>
</dbReference>
<dbReference type="PANTHER" id="PTHR10642:SF26">
    <property type="entry name" value="RIBONUCLEASE H1"/>
    <property type="match status" value="1"/>
</dbReference>
<dbReference type="Pfam" id="PF00075">
    <property type="entry name" value="RNase_H"/>
    <property type="match status" value="1"/>
</dbReference>
<dbReference type="SUPFAM" id="SSF53098">
    <property type="entry name" value="Ribonuclease H-like"/>
    <property type="match status" value="1"/>
</dbReference>
<dbReference type="PROSITE" id="PS50879">
    <property type="entry name" value="RNASE_H_1"/>
    <property type="match status" value="1"/>
</dbReference>
<name>RNH_CUPNH</name>
<organism>
    <name type="scientific">Cupriavidus necator (strain ATCC 17699 / DSM 428 / KCTC 22496 / NCIMB 10442 / H16 / Stanier 337)</name>
    <name type="common">Ralstonia eutropha</name>
    <dbReference type="NCBI Taxonomy" id="381666"/>
    <lineage>
        <taxon>Bacteria</taxon>
        <taxon>Pseudomonadati</taxon>
        <taxon>Pseudomonadota</taxon>
        <taxon>Betaproteobacteria</taxon>
        <taxon>Burkholderiales</taxon>
        <taxon>Burkholderiaceae</taxon>
        <taxon>Cupriavidus</taxon>
    </lineage>
</organism>
<keyword id="KW-0963">Cytoplasm</keyword>
<keyword id="KW-0255">Endonuclease</keyword>
<keyword id="KW-0378">Hydrolase</keyword>
<keyword id="KW-0460">Magnesium</keyword>
<keyword id="KW-0479">Metal-binding</keyword>
<keyword id="KW-0540">Nuclease</keyword>
<keyword id="KW-1185">Reference proteome</keyword>
<evidence type="ECO:0000255" key="1">
    <source>
        <dbReference type="HAMAP-Rule" id="MF_00042"/>
    </source>
</evidence>
<evidence type="ECO:0000255" key="2">
    <source>
        <dbReference type="PROSITE-ProRule" id="PRU00408"/>
    </source>
</evidence>
<gene>
    <name evidence="1" type="primary">rnhA</name>
    <name type="ordered locus">H16_A2466</name>
</gene>
<sequence>MQEVTIYSDGACKGNPGRGGWGAVLVAGASEKEMFGGEPNTTNNRMEMTAVIEALRALKRPCVVRVYTDSQYVQKGISEWLPGWKARGWKTADKKPVKNADLWQELDTLAQPHQISWHWVRGHNGHPGNERADALANRGVESIGR</sequence>
<feature type="chain" id="PRO_0000332658" description="Ribonuclease H">
    <location>
        <begin position="1"/>
        <end position="145"/>
    </location>
</feature>
<feature type="domain" description="RNase H type-1" evidence="2">
    <location>
        <begin position="1"/>
        <end position="141"/>
    </location>
</feature>
<feature type="binding site" evidence="1">
    <location>
        <position position="9"/>
    </location>
    <ligand>
        <name>Mg(2+)</name>
        <dbReference type="ChEBI" id="CHEBI:18420"/>
        <label>1</label>
    </ligand>
</feature>
<feature type="binding site" evidence="1">
    <location>
        <position position="9"/>
    </location>
    <ligand>
        <name>Mg(2+)</name>
        <dbReference type="ChEBI" id="CHEBI:18420"/>
        <label>2</label>
    </ligand>
</feature>
<feature type="binding site" evidence="1">
    <location>
        <position position="47"/>
    </location>
    <ligand>
        <name>Mg(2+)</name>
        <dbReference type="ChEBI" id="CHEBI:18420"/>
        <label>1</label>
    </ligand>
</feature>
<feature type="binding site" evidence="1">
    <location>
        <position position="69"/>
    </location>
    <ligand>
        <name>Mg(2+)</name>
        <dbReference type="ChEBI" id="CHEBI:18420"/>
        <label>1</label>
    </ligand>
</feature>
<feature type="binding site" evidence="1">
    <location>
        <position position="133"/>
    </location>
    <ligand>
        <name>Mg(2+)</name>
        <dbReference type="ChEBI" id="CHEBI:18420"/>
        <label>2</label>
    </ligand>
</feature>